<name>SCAM1_MOUSE</name>
<dbReference type="EMBL" id="BC034283">
    <property type="protein sequence ID" value="AAH34283.1"/>
    <property type="molecule type" value="mRNA"/>
</dbReference>
<dbReference type="CCDS" id="CCDS36750.1"/>
<dbReference type="RefSeq" id="NP_083429.1">
    <property type="nucleotide sequence ID" value="NM_029153.1"/>
</dbReference>
<dbReference type="SMR" id="Q8K021"/>
<dbReference type="BioGRID" id="223555">
    <property type="interactions" value="11"/>
</dbReference>
<dbReference type="FunCoup" id="Q8K021">
    <property type="interactions" value="2408"/>
</dbReference>
<dbReference type="IntAct" id="Q8K021">
    <property type="interactions" value="1"/>
</dbReference>
<dbReference type="STRING" id="10090.ENSMUSP00000022197"/>
<dbReference type="GlyGen" id="Q8K021">
    <property type="glycosylation" value="3 sites, 2 N-linked glycans (2 sites), 1 O-linked glycan (1 site)"/>
</dbReference>
<dbReference type="iPTMnet" id="Q8K021"/>
<dbReference type="PhosphoSitePlus" id="Q8K021"/>
<dbReference type="SwissPalm" id="Q8K021"/>
<dbReference type="jPOST" id="Q8K021"/>
<dbReference type="PaxDb" id="10090-ENSMUSP00000022197"/>
<dbReference type="ProteomicsDB" id="255479"/>
<dbReference type="Pumba" id="Q8K021"/>
<dbReference type="Antibodypedia" id="24511">
    <property type="antibodies" value="156 antibodies from 26 providers"/>
</dbReference>
<dbReference type="DNASU" id="107767"/>
<dbReference type="Ensembl" id="ENSMUST00000022197.15">
    <property type="protein sequence ID" value="ENSMUSP00000022197.9"/>
    <property type="gene ID" value="ENSMUSG00000021687.15"/>
</dbReference>
<dbReference type="GeneID" id="107767"/>
<dbReference type="KEGG" id="mmu:107767"/>
<dbReference type="UCSC" id="uc007rlr.1">
    <property type="organism name" value="mouse"/>
</dbReference>
<dbReference type="AGR" id="MGI:1349480"/>
<dbReference type="CTD" id="9522"/>
<dbReference type="MGI" id="MGI:1349480">
    <property type="gene designation" value="Scamp1"/>
</dbReference>
<dbReference type="VEuPathDB" id="HostDB:ENSMUSG00000021687"/>
<dbReference type="eggNOG" id="KOG3088">
    <property type="taxonomic scope" value="Eukaryota"/>
</dbReference>
<dbReference type="GeneTree" id="ENSGT00940000157310"/>
<dbReference type="InParanoid" id="Q8K021"/>
<dbReference type="OMA" id="NMVACIF"/>
<dbReference type="OrthoDB" id="242866at2759"/>
<dbReference type="PhylomeDB" id="Q8K021"/>
<dbReference type="TreeFam" id="TF313797"/>
<dbReference type="Reactome" id="R-MMU-6798695">
    <property type="pathway name" value="Neutrophil degranulation"/>
</dbReference>
<dbReference type="BioGRID-ORCS" id="107767">
    <property type="hits" value="4 hits in 79 CRISPR screens"/>
</dbReference>
<dbReference type="ChiTaRS" id="Scamp1">
    <property type="organism name" value="mouse"/>
</dbReference>
<dbReference type="PRO" id="PR:Q8K021"/>
<dbReference type="Proteomes" id="UP000000589">
    <property type="component" value="Chromosome 13"/>
</dbReference>
<dbReference type="RNAct" id="Q8K021">
    <property type="molecule type" value="protein"/>
</dbReference>
<dbReference type="Bgee" id="ENSMUSG00000021687">
    <property type="expression patterns" value="Expressed in ventral tegmental area and 252 other cell types or tissues"/>
</dbReference>
<dbReference type="ExpressionAtlas" id="Q8K021">
    <property type="expression patterns" value="baseline and differential"/>
</dbReference>
<dbReference type="GO" id="GO:0030136">
    <property type="term" value="C:clathrin-coated vesicle"/>
    <property type="evidence" value="ECO:0007669"/>
    <property type="project" value="Ensembl"/>
</dbReference>
<dbReference type="GO" id="GO:0030659">
    <property type="term" value="C:cytoplasmic vesicle membrane"/>
    <property type="evidence" value="ECO:0000314"/>
    <property type="project" value="MGI"/>
</dbReference>
<dbReference type="GO" id="GO:0016020">
    <property type="term" value="C:membrane"/>
    <property type="evidence" value="ECO:0000250"/>
    <property type="project" value="UniProtKB"/>
</dbReference>
<dbReference type="GO" id="GO:0055038">
    <property type="term" value="C:recycling endosome membrane"/>
    <property type="evidence" value="ECO:0000250"/>
    <property type="project" value="UniProtKB"/>
</dbReference>
<dbReference type="GO" id="GO:0045202">
    <property type="term" value="C:synapse"/>
    <property type="evidence" value="ECO:0000314"/>
    <property type="project" value="MGI"/>
</dbReference>
<dbReference type="GO" id="GO:0008021">
    <property type="term" value="C:synaptic vesicle"/>
    <property type="evidence" value="ECO:0000304"/>
    <property type="project" value="MGI"/>
</dbReference>
<dbReference type="GO" id="GO:0030672">
    <property type="term" value="C:synaptic vesicle membrane"/>
    <property type="evidence" value="ECO:0000314"/>
    <property type="project" value="MGI"/>
</dbReference>
<dbReference type="GO" id="GO:0005802">
    <property type="term" value="C:trans-Golgi network"/>
    <property type="evidence" value="ECO:0000250"/>
    <property type="project" value="UniProtKB"/>
</dbReference>
<dbReference type="GO" id="GO:0042589">
    <property type="term" value="C:zymogen granule membrane"/>
    <property type="evidence" value="ECO:0000314"/>
    <property type="project" value="MGI"/>
</dbReference>
<dbReference type="GO" id="GO:0019904">
    <property type="term" value="F:protein domain specific binding"/>
    <property type="evidence" value="ECO:0007669"/>
    <property type="project" value="Ensembl"/>
</dbReference>
<dbReference type="GO" id="GO:0006897">
    <property type="term" value="P:endocytosis"/>
    <property type="evidence" value="ECO:0007669"/>
    <property type="project" value="Ensembl"/>
</dbReference>
<dbReference type="GO" id="GO:0051649">
    <property type="term" value="P:establishment of localization in cell"/>
    <property type="evidence" value="ECO:0000315"/>
    <property type="project" value="MGI"/>
</dbReference>
<dbReference type="GO" id="GO:0006887">
    <property type="term" value="P:exocytosis"/>
    <property type="evidence" value="ECO:0000315"/>
    <property type="project" value="MGI"/>
</dbReference>
<dbReference type="GO" id="GO:0015031">
    <property type="term" value="P:protein transport"/>
    <property type="evidence" value="ECO:0000250"/>
    <property type="project" value="UniProtKB"/>
</dbReference>
<dbReference type="InterPro" id="IPR007273">
    <property type="entry name" value="SCAMP"/>
</dbReference>
<dbReference type="PANTHER" id="PTHR10687:SF8">
    <property type="entry name" value="SECRETORY CARRIER-ASSOCIATED MEMBRANE PROTEIN 1"/>
    <property type="match status" value="1"/>
</dbReference>
<dbReference type="PANTHER" id="PTHR10687">
    <property type="entry name" value="SECRETORY CARRIER-ASSOCIATED MEMBRANE PROTEIN SCAMP"/>
    <property type="match status" value="1"/>
</dbReference>
<dbReference type="Pfam" id="PF04144">
    <property type="entry name" value="SCAMP"/>
    <property type="match status" value="1"/>
</dbReference>
<accession>Q8K021</accession>
<proteinExistence type="evidence at protein level"/>
<reference key="1">
    <citation type="journal article" date="2004" name="Genome Res.">
        <title>The status, quality, and expansion of the NIH full-length cDNA project: the Mammalian Gene Collection (MGC).</title>
        <authorList>
            <consortium name="The MGC Project Team"/>
        </authorList>
    </citation>
    <scope>NUCLEOTIDE SEQUENCE [LARGE SCALE MRNA]</scope>
    <source>
        <tissue>Liver</tissue>
    </source>
</reference>
<reference key="2">
    <citation type="submission" date="2009-01" db="UniProtKB">
        <authorList>
            <person name="Lubec G."/>
            <person name="Kang S.U."/>
            <person name="Sunyer B."/>
            <person name="Chen W.-Q."/>
        </authorList>
    </citation>
    <scope>PROTEIN SEQUENCE OF 91-103 AND 299-334</scope>
    <scope>IDENTIFICATION BY MASS SPECTROMETRY</scope>
    <source>
        <strain>C57BL/6J</strain>
        <strain>OF1</strain>
        <tissue>Brain</tissue>
        <tissue>Hippocampus</tissue>
    </source>
</reference>
<reference key="3">
    <citation type="journal article" date="2010" name="Cell">
        <title>A tissue-specific atlas of mouse protein phosphorylation and expression.</title>
        <authorList>
            <person name="Huttlin E.L."/>
            <person name="Jedrychowski M.P."/>
            <person name="Elias J.E."/>
            <person name="Goswami T."/>
            <person name="Rad R."/>
            <person name="Beausoleil S.A."/>
            <person name="Villen J."/>
            <person name="Haas W."/>
            <person name="Sowa M.E."/>
            <person name="Gygi S.P."/>
        </authorList>
    </citation>
    <scope>IDENTIFICATION BY MASS SPECTROMETRY [LARGE SCALE ANALYSIS]</scope>
    <source>
        <tissue>Brain</tissue>
        <tissue>Brown adipose tissue</tissue>
        <tissue>Heart</tissue>
        <tissue>Kidney</tissue>
        <tissue>Liver</tissue>
        <tissue>Lung</tissue>
        <tissue>Pancreas</tissue>
        <tissue>Spleen</tissue>
        <tissue>Testis</tissue>
    </source>
</reference>
<organism>
    <name type="scientific">Mus musculus</name>
    <name type="common">Mouse</name>
    <dbReference type="NCBI Taxonomy" id="10090"/>
    <lineage>
        <taxon>Eukaryota</taxon>
        <taxon>Metazoa</taxon>
        <taxon>Chordata</taxon>
        <taxon>Craniata</taxon>
        <taxon>Vertebrata</taxon>
        <taxon>Euteleostomi</taxon>
        <taxon>Mammalia</taxon>
        <taxon>Eutheria</taxon>
        <taxon>Euarchontoglires</taxon>
        <taxon>Glires</taxon>
        <taxon>Rodentia</taxon>
        <taxon>Myomorpha</taxon>
        <taxon>Muroidea</taxon>
        <taxon>Muridae</taxon>
        <taxon>Murinae</taxon>
        <taxon>Mus</taxon>
        <taxon>Mus</taxon>
    </lineage>
</organism>
<gene>
    <name type="primary">Scamp1</name>
</gene>
<feature type="initiator methionine" description="Removed" evidence="2">
    <location>
        <position position="1"/>
    </location>
</feature>
<feature type="chain" id="PRO_0000191251" description="Secretory carrier-associated membrane protein 1">
    <location>
        <begin position="2"/>
        <end position="338"/>
    </location>
</feature>
<feature type="topological domain" description="Cytoplasmic" evidence="4">
    <location>
        <begin position="2"/>
        <end position="155"/>
    </location>
</feature>
<feature type="transmembrane region" description="Helical" evidence="4">
    <location>
        <begin position="156"/>
        <end position="176"/>
    </location>
</feature>
<feature type="topological domain" description="Lumenal" evidence="4">
    <location>
        <begin position="177"/>
        <end position="181"/>
    </location>
</feature>
<feature type="transmembrane region" description="Helical" evidence="4">
    <location>
        <begin position="182"/>
        <end position="202"/>
    </location>
</feature>
<feature type="topological domain" description="Cytoplasmic" evidence="4">
    <location>
        <begin position="203"/>
        <end position="218"/>
    </location>
</feature>
<feature type="transmembrane region" description="Helical" evidence="4">
    <location>
        <begin position="219"/>
        <end position="239"/>
    </location>
</feature>
<feature type="topological domain" description="Lumenal" evidence="4">
    <location>
        <begin position="240"/>
        <end position="261"/>
    </location>
</feature>
<feature type="transmembrane region" description="Helical" evidence="4">
    <location>
        <begin position="262"/>
        <end position="282"/>
    </location>
</feature>
<feature type="topological domain" description="Cytoplasmic" evidence="4">
    <location>
        <begin position="283"/>
        <end position="338"/>
    </location>
</feature>
<feature type="region of interest" description="Disordered" evidence="5">
    <location>
        <begin position="1"/>
        <end position="64"/>
    </location>
</feature>
<feature type="modified residue" description="N-acetylserine" evidence="2">
    <location>
        <position position="2"/>
    </location>
</feature>
<feature type="modified residue" description="Phosphoserine" evidence="3">
    <location>
        <position position="2"/>
    </location>
</feature>
<feature type="modified residue" description="Phosphothreonine" evidence="2">
    <location>
        <position position="45"/>
    </location>
</feature>
<sequence>MSDFDSNPFADPDLNNPFKDPSVTQVTRNVPPGLDEYNPFSDSRTPPPGSVKMPNVPNTQPAIMKPTEEHPAYTQITKEHALAQAELLKRQEELERKAAELDRREREMQNLSQHGRKNNWPPLPSNFPVGPCFYQDFSVDIPVEFQKTVKLMYYLWMFHAVTLFLNIFGCLAWFCVDSSRAVDFGLSILWFLLFTPCSFVCWYRPLYGAFRSDSSFRFFVFFFVYICQFAVHVLQAAGFHNWGNCGWISSLTGLNKNIPVGIMMIIIAALFTASAVISLVMFKKVHGLYRTTGASFEKAQQEFATGVMSNKTVQTAAANAASTAATSAAQNAFKGNQM</sequence>
<protein>
    <recommendedName>
        <fullName>Secretory carrier-associated membrane protein 1</fullName>
        <shortName>Secretory carrier membrane protein 1</shortName>
    </recommendedName>
</protein>
<keyword id="KW-0007">Acetylation</keyword>
<keyword id="KW-0903">Direct protein sequencing</keyword>
<keyword id="KW-0967">Endosome</keyword>
<keyword id="KW-0333">Golgi apparatus</keyword>
<keyword id="KW-0472">Membrane</keyword>
<keyword id="KW-0597">Phosphoprotein</keyword>
<keyword id="KW-0653">Protein transport</keyword>
<keyword id="KW-1185">Reference proteome</keyword>
<keyword id="KW-0812">Transmembrane</keyword>
<keyword id="KW-1133">Transmembrane helix</keyword>
<keyword id="KW-0813">Transport</keyword>
<comment type="function">
    <text evidence="1">Functions in post-Golgi recycling pathways. Acts as a recycling carrier to the cell surface (By similarity).</text>
</comment>
<comment type="subunit">
    <text evidence="1">Interacts with SYNRG, ITSN1 and SLC9A7.</text>
</comment>
<comment type="subcellular location">
    <subcellularLocation>
        <location evidence="1">Golgi apparatus</location>
        <location evidence="1">trans-Golgi network membrane</location>
        <topology evidence="1">Multi-pass membrane protein</topology>
    </subcellularLocation>
    <subcellularLocation>
        <location evidence="1">Recycling endosome membrane</location>
        <topology evidence="1">Multi-pass membrane protein</topology>
    </subcellularLocation>
</comment>
<comment type="similarity">
    <text evidence="6">Belongs to the SCAMP family.</text>
</comment>
<evidence type="ECO:0000250" key="1"/>
<evidence type="ECO:0000250" key="2">
    <source>
        <dbReference type="UniProtKB" id="O15126"/>
    </source>
</evidence>
<evidence type="ECO:0000250" key="3">
    <source>
        <dbReference type="UniProtKB" id="P56603"/>
    </source>
</evidence>
<evidence type="ECO:0000255" key="4"/>
<evidence type="ECO:0000256" key="5">
    <source>
        <dbReference type="SAM" id="MobiDB-lite"/>
    </source>
</evidence>
<evidence type="ECO:0000305" key="6"/>